<gene>
    <name type="ordered locus">FP1751</name>
</gene>
<accession>A6H0E5</accession>
<reference key="1">
    <citation type="journal article" date="2007" name="Nat. Biotechnol.">
        <title>Complete genome sequence of the fish pathogen Flavobacterium psychrophilum.</title>
        <authorList>
            <person name="Duchaud E."/>
            <person name="Boussaha M."/>
            <person name="Loux V."/>
            <person name="Bernardet J.-F."/>
            <person name="Michel C."/>
            <person name="Kerouault B."/>
            <person name="Mondot S."/>
            <person name="Nicolas P."/>
            <person name="Bossy R."/>
            <person name="Caron C."/>
            <person name="Bessieres P."/>
            <person name="Gibrat J.-F."/>
            <person name="Claverol S."/>
            <person name="Dumetz F."/>
            <person name="Le Henaff M."/>
            <person name="Benmansour A."/>
        </authorList>
    </citation>
    <scope>NUCLEOTIDE SEQUENCE [LARGE SCALE GENOMIC DNA]</scope>
    <source>
        <strain>ATCC 49511 / DSM 21280 / CIP 103535 / JIP02/86</strain>
    </source>
</reference>
<organism>
    <name type="scientific">Flavobacterium psychrophilum (strain ATCC 49511 / DSM 21280 / CIP 103535 / JIP02/86)</name>
    <dbReference type="NCBI Taxonomy" id="402612"/>
    <lineage>
        <taxon>Bacteria</taxon>
        <taxon>Pseudomonadati</taxon>
        <taxon>Bacteroidota</taxon>
        <taxon>Flavobacteriia</taxon>
        <taxon>Flavobacteriales</taxon>
        <taxon>Flavobacteriaceae</taxon>
        <taxon>Flavobacterium</taxon>
    </lineage>
</organism>
<protein>
    <recommendedName>
        <fullName evidence="1">Putative pre-16S rRNA nuclease</fullName>
        <ecNumber evidence="1">3.1.-.-</ecNumber>
    </recommendedName>
</protein>
<comment type="function">
    <text evidence="1">Could be a nuclease involved in processing of the 5'-end of pre-16S rRNA.</text>
</comment>
<comment type="subcellular location">
    <subcellularLocation>
        <location evidence="1">Cytoplasm</location>
    </subcellularLocation>
</comment>
<comment type="similarity">
    <text evidence="1">Belongs to the YqgF nuclease family.</text>
</comment>
<feature type="chain" id="PRO_1000061515" description="Putative pre-16S rRNA nuclease">
    <location>
        <begin position="1"/>
        <end position="137"/>
    </location>
</feature>
<sequence>MPRILAIDYGQKRTGIAITDEMQIIASGLTTIASETSIAFLRDYFTKEKVEKVLIGEPKQMNGEPSQSTDIIEKFVTKFKNNFPDMAIERVDERFTSKMAFQTMIDSGLKKKQRQNKALVDEISATIMLQDYLTRKI</sequence>
<proteinExistence type="inferred from homology"/>
<keyword id="KW-0963">Cytoplasm</keyword>
<keyword id="KW-0378">Hydrolase</keyword>
<keyword id="KW-0540">Nuclease</keyword>
<keyword id="KW-1185">Reference proteome</keyword>
<keyword id="KW-0690">Ribosome biogenesis</keyword>
<dbReference type="EC" id="3.1.-.-" evidence="1"/>
<dbReference type="EMBL" id="AM398681">
    <property type="protein sequence ID" value="CAL43818.1"/>
    <property type="molecule type" value="Genomic_DNA"/>
</dbReference>
<dbReference type="RefSeq" id="YP_001296625.1">
    <property type="nucleotide sequence ID" value="NC_009613.3"/>
</dbReference>
<dbReference type="SMR" id="A6H0E5"/>
<dbReference type="STRING" id="402612.FP1751"/>
<dbReference type="EnsemblBacteria" id="CAL43818">
    <property type="protein sequence ID" value="CAL43818"/>
    <property type="gene ID" value="FP1751"/>
</dbReference>
<dbReference type="KEGG" id="fps:FP1751"/>
<dbReference type="PATRIC" id="fig|402612.5.peg.1770"/>
<dbReference type="eggNOG" id="COG0816">
    <property type="taxonomic scope" value="Bacteria"/>
</dbReference>
<dbReference type="HOGENOM" id="CLU_098240_2_1_10"/>
<dbReference type="OrthoDB" id="9796140at2"/>
<dbReference type="Proteomes" id="UP000006394">
    <property type="component" value="Chromosome"/>
</dbReference>
<dbReference type="GO" id="GO:0005829">
    <property type="term" value="C:cytosol"/>
    <property type="evidence" value="ECO:0007669"/>
    <property type="project" value="TreeGrafter"/>
</dbReference>
<dbReference type="GO" id="GO:0004518">
    <property type="term" value="F:nuclease activity"/>
    <property type="evidence" value="ECO:0007669"/>
    <property type="project" value="UniProtKB-KW"/>
</dbReference>
<dbReference type="GO" id="GO:0000967">
    <property type="term" value="P:rRNA 5'-end processing"/>
    <property type="evidence" value="ECO:0007669"/>
    <property type="project" value="UniProtKB-UniRule"/>
</dbReference>
<dbReference type="CDD" id="cd16964">
    <property type="entry name" value="YqgF"/>
    <property type="match status" value="1"/>
</dbReference>
<dbReference type="Gene3D" id="3.30.420.140">
    <property type="entry name" value="YqgF/RNase H-like domain"/>
    <property type="match status" value="1"/>
</dbReference>
<dbReference type="HAMAP" id="MF_00651">
    <property type="entry name" value="Nuclease_YqgF"/>
    <property type="match status" value="1"/>
</dbReference>
<dbReference type="InterPro" id="IPR012337">
    <property type="entry name" value="RNaseH-like_sf"/>
</dbReference>
<dbReference type="InterPro" id="IPR005227">
    <property type="entry name" value="YqgF"/>
</dbReference>
<dbReference type="InterPro" id="IPR006641">
    <property type="entry name" value="YqgF/RNaseH-like_dom"/>
</dbReference>
<dbReference type="InterPro" id="IPR037027">
    <property type="entry name" value="YqgF/RNaseH-like_dom_sf"/>
</dbReference>
<dbReference type="NCBIfam" id="TIGR00250">
    <property type="entry name" value="RNAse_H_YqgF"/>
    <property type="match status" value="1"/>
</dbReference>
<dbReference type="PANTHER" id="PTHR33317">
    <property type="entry name" value="POLYNUCLEOTIDYL TRANSFERASE, RIBONUCLEASE H-LIKE SUPERFAMILY PROTEIN"/>
    <property type="match status" value="1"/>
</dbReference>
<dbReference type="PANTHER" id="PTHR33317:SF4">
    <property type="entry name" value="POLYNUCLEOTIDYL TRANSFERASE, RIBONUCLEASE H-LIKE SUPERFAMILY PROTEIN"/>
    <property type="match status" value="1"/>
</dbReference>
<dbReference type="Pfam" id="PF03652">
    <property type="entry name" value="RuvX"/>
    <property type="match status" value="1"/>
</dbReference>
<dbReference type="SMART" id="SM00732">
    <property type="entry name" value="YqgFc"/>
    <property type="match status" value="1"/>
</dbReference>
<dbReference type="SUPFAM" id="SSF53098">
    <property type="entry name" value="Ribonuclease H-like"/>
    <property type="match status" value="1"/>
</dbReference>
<name>YQGF_FLAPJ</name>
<evidence type="ECO:0000255" key="1">
    <source>
        <dbReference type="HAMAP-Rule" id="MF_00651"/>
    </source>
</evidence>